<sequence length="60" mass="6005">MDPCDCSKSGTCNCGGSCTCTNCSCKSCKKSCCPCCPSGCTKCASGCVCKGKTCDTSCCQ</sequence>
<protein>
    <recommendedName>
        <fullName>Metallothionein A</fullName>
        <shortName>MT-A</shortName>
        <shortName>MT-I</shortName>
    </recommendedName>
</protein>
<comment type="function">
    <text evidence="1">Metallothioneins have a high content of cysteine residues that bind various heavy metals.</text>
</comment>
<comment type="domain">
    <text>Class I metallothioneins contain 2 metal-binding domains: four divalent ions are chelated within cluster A of the alpha domain and are coordinated via cysteinyl thiolate bridges to 11 cysteine ligands. Cluster B, the corresponding region within the beta domain, can ligate three divalent ions to 9 cysteines.</text>
</comment>
<comment type="similarity">
    <text evidence="4">Belongs to the metallothionein superfamily. Type 1 family.</text>
</comment>
<evidence type="ECO:0000250" key="1"/>
<evidence type="ECO:0000250" key="2">
    <source>
        <dbReference type="UniProtKB" id="P02795"/>
    </source>
</evidence>
<evidence type="ECO:0000250" key="3">
    <source>
        <dbReference type="UniProtKB" id="P62339"/>
    </source>
</evidence>
<evidence type="ECO:0000305" key="4"/>
<gene>
    <name type="primary">mta</name>
</gene>
<name>MTA_PAGBO</name>
<proteinExistence type="inferred from homology"/>
<accession>P68508</accession>
<accession>O13258</accession>
<keyword id="KW-0479">Metal-binding</keyword>
<keyword id="KW-0480">Metal-thiolate cluster</keyword>
<keyword id="KW-0862">Zinc</keyword>
<dbReference type="EMBL" id="AJ007562">
    <property type="protein sequence ID" value="CAA07557.1"/>
    <property type="molecule type" value="mRNA"/>
</dbReference>
<dbReference type="SMR" id="P68508"/>
<dbReference type="GO" id="GO:0046872">
    <property type="term" value="F:metal ion binding"/>
    <property type="evidence" value="ECO:0007669"/>
    <property type="project" value="UniProtKB-KW"/>
</dbReference>
<dbReference type="FunFam" id="4.10.10.10:FF:000001">
    <property type="entry name" value="Metallothionein"/>
    <property type="match status" value="1"/>
</dbReference>
<dbReference type="Gene3D" id="4.10.10.10">
    <property type="entry name" value="Metallothionein Isoform II"/>
    <property type="match status" value="1"/>
</dbReference>
<dbReference type="InterPro" id="IPR017854">
    <property type="entry name" value="Metalthion_dom_sf"/>
</dbReference>
<dbReference type="InterPro" id="IPR023587">
    <property type="entry name" value="Metalthion_dom_sf_vert"/>
</dbReference>
<dbReference type="InterPro" id="IPR000006">
    <property type="entry name" value="Metalthion_vert"/>
</dbReference>
<dbReference type="InterPro" id="IPR018064">
    <property type="entry name" value="Metalthion_vert_metal_BS"/>
</dbReference>
<dbReference type="PANTHER" id="PTHR23299">
    <property type="entry name" value="METALLOTHIONEIN"/>
    <property type="match status" value="1"/>
</dbReference>
<dbReference type="PANTHER" id="PTHR23299:SF24">
    <property type="entry name" value="METALLOTHIONEIN-1X"/>
    <property type="match status" value="1"/>
</dbReference>
<dbReference type="Pfam" id="PF00131">
    <property type="entry name" value="Metallothio"/>
    <property type="match status" value="1"/>
</dbReference>
<dbReference type="PRINTS" id="PR00860">
    <property type="entry name" value="MTVERTEBRATE"/>
</dbReference>
<dbReference type="SUPFAM" id="SSF57868">
    <property type="entry name" value="Metallothionein"/>
    <property type="match status" value="1"/>
</dbReference>
<dbReference type="PROSITE" id="PS00203">
    <property type="entry name" value="METALLOTHIONEIN_VRT"/>
    <property type="match status" value="1"/>
</dbReference>
<reference key="1">
    <citation type="journal article" date="1999" name="Mol. Biol. Evol.">
        <title>Metallothioneins in antarctic fish: evidence for independent duplication and gene conversion.</title>
        <authorList>
            <person name="Bargelloni L."/>
            <person name="Scudiero R."/>
            <person name="Parisi E."/>
            <person name="Carginale V."/>
            <person name="Capasso C."/>
            <person name="Patarnello T."/>
        </authorList>
    </citation>
    <scope>NUCLEOTIDE SEQUENCE [MRNA]</scope>
    <source>
        <tissue>Liver</tissue>
    </source>
</reference>
<organism>
    <name type="scientific">Pagothenia borchgrevinki</name>
    <name type="common">Bald rockcod</name>
    <name type="synonym">Trematomus borchgrevinki</name>
    <dbReference type="NCBI Taxonomy" id="8213"/>
    <lineage>
        <taxon>Eukaryota</taxon>
        <taxon>Metazoa</taxon>
        <taxon>Chordata</taxon>
        <taxon>Craniata</taxon>
        <taxon>Vertebrata</taxon>
        <taxon>Euteleostomi</taxon>
        <taxon>Actinopterygii</taxon>
        <taxon>Neopterygii</taxon>
        <taxon>Teleostei</taxon>
        <taxon>Neoteleostei</taxon>
        <taxon>Acanthomorphata</taxon>
        <taxon>Eupercaria</taxon>
        <taxon>Perciformes</taxon>
        <taxon>Notothenioidei</taxon>
        <taxon>Nototheniidae</taxon>
        <taxon>Pagothenia</taxon>
    </lineage>
</organism>
<feature type="chain" id="PRO_0000197302" description="Metallothionein A">
    <location>
        <begin position="1"/>
        <end position="60"/>
    </location>
</feature>
<feature type="region of interest" description="Beta">
    <location>
        <begin position="1"/>
        <end position="28"/>
    </location>
</feature>
<feature type="region of interest" description="Alpha">
    <location>
        <begin position="29"/>
        <end position="60"/>
    </location>
</feature>
<feature type="binding site" evidence="2">
    <location>
        <position position="4"/>
    </location>
    <ligand>
        <name>a divalent metal cation</name>
        <dbReference type="ChEBI" id="CHEBI:60240"/>
        <label>1</label>
        <note>in cluster B</note>
    </ligand>
</feature>
<feature type="binding site" evidence="2">
    <location>
        <position position="6"/>
    </location>
    <ligand>
        <name>a divalent metal cation</name>
        <dbReference type="ChEBI" id="CHEBI:60240"/>
        <label>1</label>
        <note>in cluster B</note>
    </ligand>
</feature>
<feature type="binding site" evidence="2">
    <location>
        <position position="6"/>
    </location>
    <ligand>
        <name>a divalent metal cation</name>
        <dbReference type="ChEBI" id="CHEBI:60240"/>
        <label>2</label>
        <note>in cluster B</note>
    </ligand>
</feature>
<feature type="binding site" evidence="2">
    <location>
        <position position="12"/>
    </location>
    <ligand>
        <name>a divalent metal cation</name>
        <dbReference type="ChEBI" id="CHEBI:60240"/>
        <label>2</label>
        <note>in cluster B</note>
    </ligand>
</feature>
<feature type="binding site" evidence="2">
    <location>
        <position position="14"/>
    </location>
    <ligand>
        <name>a divalent metal cation</name>
        <dbReference type="ChEBI" id="CHEBI:60240"/>
        <label>2</label>
        <note>in cluster B</note>
    </ligand>
</feature>
<feature type="binding site" evidence="2">
    <location>
        <position position="14"/>
    </location>
    <ligand>
        <name>a divalent metal cation</name>
        <dbReference type="ChEBI" id="CHEBI:60240"/>
        <label>3</label>
        <note>in cluster B</note>
    </ligand>
</feature>
<feature type="binding site" evidence="2">
    <location>
        <position position="18"/>
    </location>
    <ligand>
        <name>a divalent metal cation</name>
        <dbReference type="ChEBI" id="CHEBI:60240"/>
        <label>3</label>
        <note>in cluster B</note>
    </ligand>
</feature>
<feature type="binding site" evidence="2">
    <location>
        <position position="20"/>
    </location>
    <ligand>
        <name>a divalent metal cation</name>
        <dbReference type="ChEBI" id="CHEBI:60240"/>
        <label>1</label>
        <note>in cluster B</note>
    </ligand>
</feature>
<feature type="binding site" evidence="2">
    <location>
        <position position="23"/>
    </location>
    <ligand>
        <name>a divalent metal cation</name>
        <dbReference type="ChEBI" id="CHEBI:60240"/>
        <label>1</label>
        <note>in cluster B</note>
    </ligand>
</feature>
<feature type="binding site" evidence="2">
    <location>
        <position position="23"/>
    </location>
    <ligand>
        <name>a divalent metal cation</name>
        <dbReference type="ChEBI" id="CHEBI:60240"/>
        <label>3</label>
        <note>in cluster B</note>
    </ligand>
</feature>
<feature type="binding site" evidence="2">
    <location>
        <position position="25"/>
    </location>
    <ligand>
        <name>a divalent metal cation</name>
        <dbReference type="ChEBI" id="CHEBI:60240"/>
        <label>2</label>
        <note>in cluster B</note>
    </ligand>
</feature>
<feature type="binding site" evidence="2">
    <location>
        <position position="28"/>
    </location>
    <ligand>
        <name>a divalent metal cation</name>
        <dbReference type="ChEBI" id="CHEBI:60240"/>
        <label>3</label>
        <note>in cluster B</note>
    </ligand>
</feature>
<feature type="binding site" evidence="2">
    <location>
        <position position="32"/>
    </location>
    <ligand>
        <name>a divalent metal cation</name>
        <dbReference type="ChEBI" id="CHEBI:60240"/>
        <label>4</label>
        <note>in cluster A</note>
    </ligand>
</feature>
<feature type="binding site" evidence="2">
    <location>
        <position position="33"/>
    </location>
    <ligand>
        <name>a divalent metal cation</name>
        <dbReference type="ChEBI" id="CHEBI:60240"/>
        <label>4</label>
        <note>in cluster A</note>
    </ligand>
</feature>
<feature type="binding site" evidence="2">
    <location>
        <position position="33"/>
    </location>
    <ligand>
        <name>a divalent metal cation</name>
        <dbReference type="ChEBI" id="CHEBI:60240"/>
        <label>5</label>
        <note>in cluster A</note>
    </ligand>
</feature>
<feature type="binding site" evidence="2">
    <location>
        <position position="35"/>
    </location>
    <ligand>
        <name>a divalent metal cation</name>
        <dbReference type="ChEBI" id="CHEBI:60240"/>
        <label>5</label>
        <note>in cluster A</note>
    </ligand>
</feature>
<feature type="binding site" evidence="2">
    <location>
        <position position="36"/>
    </location>
    <ligand>
        <name>a divalent metal cation</name>
        <dbReference type="ChEBI" id="CHEBI:60240"/>
        <label>5</label>
        <note>in cluster A</note>
    </ligand>
</feature>
<feature type="binding site" evidence="2">
    <location>
        <position position="36"/>
    </location>
    <ligand>
        <name>a divalent metal cation</name>
        <dbReference type="ChEBI" id="CHEBI:60240"/>
        <label>6</label>
        <note>in cluster A</note>
    </ligand>
</feature>
<feature type="binding site" evidence="2">
    <location>
        <position position="40"/>
    </location>
    <ligand>
        <name>a divalent metal cation</name>
        <dbReference type="ChEBI" id="CHEBI:60240"/>
        <label>6</label>
        <note>in cluster A</note>
    </ligand>
</feature>
<feature type="binding site" evidence="2">
    <location>
        <position position="43"/>
    </location>
    <ligand>
        <name>a divalent metal cation</name>
        <dbReference type="ChEBI" id="CHEBI:60240"/>
        <label>4</label>
        <note>in cluster A</note>
    </ligand>
</feature>
<feature type="binding site" evidence="2">
    <location>
        <position position="43"/>
    </location>
    <ligand>
        <name>a divalent metal cation</name>
        <dbReference type="ChEBI" id="CHEBI:60240"/>
        <label>6</label>
        <note>in cluster A</note>
    </ligand>
</feature>
<feature type="binding site" evidence="2">
    <location>
        <position position="47"/>
    </location>
    <ligand>
        <name>a divalent metal cation</name>
        <dbReference type="ChEBI" id="CHEBI:60240"/>
        <label>4</label>
        <note>in cluster A</note>
    </ligand>
</feature>
<feature type="binding site" evidence="2">
    <location>
        <position position="49"/>
    </location>
    <ligand>
        <name>a divalent metal cation</name>
        <dbReference type="ChEBI" id="CHEBI:60240"/>
        <label>5</label>
        <note>in cluster A</note>
    </ligand>
</feature>
<feature type="binding site" evidence="2">
    <location>
        <position position="49"/>
    </location>
    <ligand>
        <name>a divalent metal cation</name>
        <dbReference type="ChEBI" id="CHEBI:60240"/>
        <label>7</label>
        <note>in cluster A</note>
    </ligand>
</feature>
<feature type="binding site" evidence="3">
    <location>
        <position position="54"/>
    </location>
    <ligand>
        <name>a divalent metal cation</name>
        <dbReference type="ChEBI" id="CHEBI:60240"/>
        <label>7</label>
        <note>in cluster A</note>
    </ligand>
</feature>
<feature type="binding site" evidence="2">
    <location>
        <position position="58"/>
    </location>
    <ligand>
        <name>a divalent metal cation</name>
        <dbReference type="ChEBI" id="CHEBI:60240"/>
        <label>7</label>
        <note>in cluster A</note>
    </ligand>
</feature>
<feature type="binding site" evidence="2">
    <location>
        <position position="59"/>
    </location>
    <ligand>
        <name>a divalent metal cation</name>
        <dbReference type="ChEBI" id="CHEBI:60240"/>
        <label>6</label>
        <note>in cluster A</note>
    </ligand>
</feature>
<feature type="binding site" evidence="2">
    <location>
        <position position="59"/>
    </location>
    <ligand>
        <name>a divalent metal cation</name>
        <dbReference type="ChEBI" id="CHEBI:60240"/>
        <label>7</label>
        <note>in cluster A</note>
    </ligand>
</feature>